<proteinExistence type="inferred from homology"/>
<keyword id="KW-1185">Reference proteome</keyword>
<keyword id="KW-0687">Ribonucleoprotein</keyword>
<keyword id="KW-0689">Ribosomal protein</keyword>
<feature type="chain" id="PRO_0000267855" description="Large ribosomal subunit protein bL17">
    <location>
        <begin position="1"/>
        <end position="114"/>
    </location>
</feature>
<evidence type="ECO:0000255" key="1">
    <source>
        <dbReference type="HAMAP-Rule" id="MF_01368"/>
    </source>
</evidence>
<evidence type="ECO:0000305" key="2"/>
<dbReference type="EMBL" id="AE001437">
    <property type="protein sequence ID" value="AAK81043.1"/>
    <property type="molecule type" value="Genomic_DNA"/>
</dbReference>
<dbReference type="PIR" id="H97281">
    <property type="entry name" value="H97281"/>
</dbReference>
<dbReference type="RefSeq" id="NP_349703.1">
    <property type="nucleotide sequence ID" value="NC_003030.1"/>
</dbReference>
<dbReference type="RefSeq" id="WP_010966384.1">
    <property type="nucleotide sequence ID" value="NC_003030.1"/>
</dbReference>
<dbReference type="SMR" id="Q97EK7"/>
<dbReference type="STRING" id="272562.CA_C3103"/>
<dbReference type="GeneID" id="44999590"/>
<dbReference type="KEGG" id="cac:CA_C3103"/>
<dbReference type="PATRIC" id="fig|272562.8.peg.3286"/>
<dbReference type="eggNOG" id="COG0203">
    <property type="taxonomic scope" value="Bacteria"/>
</dbReference>
<dbReference type="HOGENOM" id="CLU_074407_2_2_9"/>
<dbReference type="OrthoDB" id="9809073at2"/>
<dbReference type="Proteomes" id="UP000000814">
    <property type="component" value="Chromosome"/>
</dbReference>
<dbReference type="GO" id="GO:0022625">
    <property type="term" value="C:cytosolic large ribosomal subunit"/>
    <property type="evidence" value="ECO:0007669"/>
    <property type="project" value="TreeGrafter"/>
</dbReference>
<dbReference type="GO" id="GO:0003735">
    <property type="term" value="F:structural constituent of ribosome"/>
    <property type="evidence" value="ECO:0007669"/>
    <property type="project" value="InterPro"/>
</dbReference>
<dbReference type="GO" id="GO:0006412">
    <property type="term" value="P:translation"/>
    <property type="evidence" value="ECO:0007669"/>
    <property type="project" value="UniProtKB-UniRule"/>
</dbReference>
<dbReference type="FunFam" id="3.90.1030.10:FF:000002">
    <property type="entry name" value="50S ribosomal protein L17"/>
    <property type="match status" value="1"/>
</dbReference>
<dbReference type="Gene3D" id="3.90.1030.10">
    <property type="entry name" value="Ribosomal protein L17"/>
    <property type="match status" value="1"/>
</dbReference>
<dbReference type="HAMAP" id="MF_01368">
    <property type="entry name" value="Ribosomal_bL17"/>
    <property type="match status" value="1"/>
</dbReference>
<dbReference type="InterPro" id="IPR000456">
    <property type="entry name" value="Ribosomal_bL17"/>
</dbReference>
<dbReference type="InterPro" id="IPR047859">
    <property type="entry name" value="Ribosomal_bL17_CS"/>
</dbReference>
<dbReference type="InterPro" id="IPR036373">
    <property type="entry name" value="Ribosomal_bL17_sf"/>
</dbReference>
<dbReference type="NCBIfam" id="TIGR00059">
    <property type="entry name" value="L17"/>
    <property type="match status" value="1"/>
</dbReference>
<dbReference type="PANTHER" id="PTHR14413:SF16">
    <property type="entry name" value="LARGE RIBOSOMAL SUBUNIT PROTEIN BL17M"/>
    <property type="match status" value="1"/>
</dbReference>
<dbReference type="PANTHER" id="PTHR14413">
    <property type="entry name" value="RIBOSOMAL PROTEIN L17"/>
    <property type="match status" value="1"/>
</dbReference>
<dbReference type="Pfam" id="PF01196">
    <property type="entry name" value="Ribosomal_L17"/>
    <property type="match status" value="1"/>
</dbReference>
<dbReference type="SUPFAM" id="SSF64263">
    <property type="entry name" value="Prokaryotic ribosomal protein L17"/>
    <property type="match status" value="1"/>
</dbReference>
<dbReference type="PROSITE" id="PS01167">
    <property type="entry name" value="RIBOSOMAL_L17"/>
    <property type="match status" value="1"/>
</dbReference>
<sequence length="114" mass="13009">MASGYRKLGRPTDQRRAMLRNLVTSFLKHGKIETTVTRAKETRSLAEKMITLAKRGDLHARRQVLSFVTEETVVKKLFDEVAPKYSERNGGYTRIYKMGPRRGDGAEIVILELV</sequence>
<organism>
    <name type="scientific">Clostridium acetobutylicum (strain ATCC 824 / DSM 792 / JCM 1419 / IAM 19013 / LMG 5710 / NBRC 13948 / NRRL B-527 / VKM B-1787 / 2291 / W)</name>
    <dbReference type="NCBI Taxonomy" id="272562"/>
    <lineage>
        <taxon>Bacteria</taxon>
        <taxon>Bacillati</taxon>
        <taxon>Bacillota</taxon>
        <taxon>Clostridia</taxon>
        <taxon>Eubacteriales</taxon>
        <taxon>Clostridiaceae</taxon>
        <taxon>Clostridium</taxon>
    </lineage>
</organism>
<protein>
    <recommendedName>
        <fullName evidence="1">Large ribosomal subunit protein bL17</fullName>
    </recommendedName>
    <alternativeName>
        <fullName evidence="2">50S ribosomal protein L17</fullName>
    </alternativeName>
</protein>
<reference key="1">
    <citation type="journal article" date="2001" name="J. Bacteriol.">
        <title>Genome sequence and comparative analysis of the solvent-producing bacterium Clostridium acetobutylicum.</title>
        <authorList>
            <person name="Noelling J."/>
            <person name="Breton G."/>
            <person name="Omelchenko M.V."/>
            <person name="Makarova K.S."/>
            <person name="Zeng Q."/>
            <person name="Gibson R."/>
            <person name="Lee H.M."/>
            <person name="Dubois J."/>
            <person name="Qiu D."/>
            <person name="Hitti J."/>
            <person name="Wolf Y.I."/>
            <person name="Tatusov R.L."/>
            <person name="Sabathe F."/>
            <person name="Doucette-Stamm L.A."/>
            <person name="Soucaille P."/>
            <person name="Daly M.J."/>
            <person name="Bennett G.N."/>
            <person name="Koonin E.V."/>
            <person name="Smith D.R."/>
        </authorList>
    </citation>
    <scope>NUCLEOTIDE SEQUENCE [LARGE SCALE GENOMIC DNA]</scope>
    <source>
        <strain>ATCC 824 / DSM 792 / JCM 1419 / IAM 19013 / LMG 5710 / NBRC 13948 / NRRL B-527 / VKM B-1787 / 2291 / W</strain>
    </source>
</reference>
<comment type="subunit">
    <text evidence="1">Part of the 50S ribosomal subunit. Contacts protein L32.</text>
</comment>
<comment type="similarity">
    <text evidence="1">Belongs to the bacterial ribosomal protein bL17 family.</text>
</comment>
<name>RL17_CLOAB</name>
<gene>
    <name evidence="1" type="primary">rplQ</name>
    <name type="ordered locus">CA_C3103</name>
</gene>
<accession>Q97EK7</accession>